<organismHost>
    <name type="scientific">Acanthamoeba polyphaga</name>
    <name type="common">Amoeba</name>
    <dbReference type="NCBI Taxonomy" id="5757"/>
</organismHost>
<evidence type="ECO:0000255" key="1"/>
<evidence type="ECO:0000256" key="2">
    <source>
        <dbReference type="SAM" id="MobiDB-lite"/>
    </source>
</evidence>
<dbReference type="EMBL" id="AY653733">
    <property type="protein sequence ID" value="AAV50795.1"/>
    <property type="molecule type" value="Genomic_DNA"/>
</dbReference>
<dbReference type="KEGG" id="vg:9925163"/>
<dbReference type="OrthoDB" id="31960at10239"/>
<dbReference type="Proteomes" id="UP000001134">
    <property type="component" value="Genome"/>
</dbReference>
<dbReference type="InterPro" id="IPR045413">
    <property type="entry name" value="DUF5894"/>
</dbReference>
<dbReference type="Pfam" id="PF19246">
    <property type="entry name" value="DUF5894"/>
    <property type="match status" value="1"/>
</dbReference>
<protein>
    <recommendedName>
        <fullName>Uncharacterized protein L531</fullName>
    </recommendedName>
</protein>
<name>YL531_MIMIV</name>
<reference key="1">
    <citation type="journal article" date="2004" name="Science">
        <title>The 1.2-megabase genome sequence of Mimivirus.</title>
        <authorList>
            <person name="Raoult D."/>
            <person name="Audic S."/>
            <person name="Robert C."/>
            <person name="Abergel C."/>
            <person name="Renesto P."/>
            <person name="Ogata H."/>
            <person name="La Scola B."/>
            <person name="Susan M."/>
            <person name="Claverie J.-M."/>
        </authorList>
    </citation>
    <scope>NUCLEOTIDE SEQUENCE [LARGE SCALE GENOMIC DNA]</scope>
    <source>
        <strain>Rowbotham-Bradford</strain>
    </source>
</reference>
<proteinExistence type="predicted"/>
<feature type="chain" id="PRO_0000253276" description="Uncharacterized protein L531">
    <location>
        <begin position="1"/>
        <end position="304"/>
    </location>
</feature>
<feature type="region of interest" description="Disordered" evidence="2">
    <location>
        <begin position="96"/>
        <end position="121"/>
    </location>
</feature>
<feature type="coiled-coil region" evidence="1">
    <location>
        <begin position="3"/>
        <end position="35"/>
    </location>
</feature>
<feature type="coiled-coil region" evidence="1">
    <location>
        <begin position="89"/>
        <end position="132"/>
    </location>
</feature>
<sequence length="304" mass="35481">MVKNQYISQNMENKEIENKEIENKKTDSKEFDKEIVSCLIKIVETIDSIKPIDPEILNKKDLDLFDLMMPLAESCGMGWYYKQLQTECKSNKEIKLQNKQQENSEEKNSEEKNSEEKNSEEKRMLEILNSNLPTEGKIIIVNATNGKERKAFYTWADYHNLSHQPTRIDLFDDTFIFKCEECGESNYDDDMRYQSDWSTINPGACYGSFIKCPNYCDTFIHTEDYDPYGGIKRMIAFNAIIIGHDIPKLSRKTTKRKHNKQGLSSNDLSVFNDTPVRDFIVMDLNDFHSKFKSKDNGYVKINDE</sequence>
<keyword id="KW-0175">Coiled coil</keyword>
<keyword id="KW-1185">Reference proteome</keyword>
<organism>
    <name type="scientific">Acanthamoeba polyphaga mimivirus</name>
    <name type="common">APMV</name>
    <dbReference type="NCBI Taxonomy" id="212035"/>
    <lineage>
        <taxon>Viruses</taxon>
        <taxon>Varidnaviria</taxon>
        <taxon>Bamfordvirae</taxon>
        <taxon>Nucleocytoviricota</taxon>
        <taxon>Megaviricetes</taxon>
        <taxon>Imitervirales</taxon>
        <taxon>Mimiviridae</taxon>
        <taxon>Megamimivirinae</taxon>
        <taxon>Mimivirus</taxon>
        <taxon>Mimivirus bradfordmassiliense</taxon>
    </lineage>
</organism>
<gene>
    <name type="ordered locus">MIMI_L531</name>
</gene>
<accession>Q5UQ91</accession>